<proteinExistence type="evidence at protein level"/>
<reference key="1">
    <citation type="submission" date="2001-08" db="EMBL/GenBank/DDBJ databases">
        <title>Cloning of a human sperm-specific binding protein of rhophilin and function in spermatogenesis.</title>
        <authorList>
            <person name="Zhou Z.M."/>
            <person name="Li J.M."/>
            <person name="Sha J.H."/>
        </authorList>
    </citation>
    <scope>NUCLEOTIDE SEQUENCE [MRNA] (ISOFORM 1)</scope>
    <source>
        <tissue>Testis</tissue>
    </source>
</reference>
<reference key="2">
    <citation type="journal article" date="2007" name="BMC Genomics">
        <title>The full-ORF clone resource of the German cDNA consortium.</title>
        <authorList>
            <person name="Bechtel S."/>
            <person name="Rosenfelder H."/>
            <person name="Duda A."/>
            <person name="Schmidt C.P."/>
            <person name="Ernst U."/>
            <person name="Wellenreuther R."/>
            <person name="Mehrle A."/>
            <person name="Schuster C."/>
            <person name="Bahr A."/>
            <person name="Bloecker H."/>
            <person name="Heubner D."/>
            <person name="Hoerlein A."/>
            <person name="Michel G."/>
            <person name="Wedler H."/>
            <person name="Koehrer K."/>
            <person name="Ottenwaelder B."/>
            <person name="Poustka A."/>
            <person name="Wiemann S."/>
            <person name="Schupp I."/>
        </authorList>
    </citation>
    <scope>NUCLEOTIDE SEQUENCE [LARGE SCALE MRNA] (ISOFORM 2)</scope>
    <source>
        <tissue>Testis</tissue>
    </source>
</reference>
<reference key="3">
    <citation type="submission" date="2005-09" db="EMBL/GenBank/DDBJ databases">
        <authorList>
            <person name="Mural R.J."/>
            <person name="Istrail S."/>
            <person name="Sutton G.G."/>
            <person name="Florea L."/>
            <person name="Halpern A.L."/>
            <person name="Mobarry C.M."/>
            <person name="Lippert R."/>
            <person name="Walenz B."/>
            <person name="Shatkay H."/>
            <person name="Dew I."/>
            <person name="Miller J.R."/>
            <person name="Flanigan M.J."/>
            <person name="Edwards N.J."/>
            <person name="Bolanos R."/>
            <person name="Fasulo D."/>
            <person name="Halldorsson B.V."/>
            <person name="Hannenhalli S."/>
            <person name="Turner R."/>
            <person name="Yooseph S."/>
            <person name="Lu F."/>
            <person name="Nusskern D.R."/>
            <person name="Shue B.C."/>
            <person name="Zheng X.H."/>
            <person name="Zhong F."/>
            <person name="Delcher A.L."/>
            <person name="Huson D.H."/>
            <person name="Kravitz S.A."/>
            <person name="Mouchard L."/>
            <person name="Reinert K."/>
            <person name="Remington K.A."/>
            <person name="Clark A.G."/>
            <person name="Waterman M.S."/>
            <person name="Eichler E.E."/>
            <person name="Adams M.D."/>
            <person name="Hunkapiller M.W."/>
            <person name="Myers E.W."/>
            <person name="Venter J.C."/>
        </authorList>
    </citation>
    <scope>NUCLEOTIDE SEQUENCE [LARGE SCALE GENOMIC DNA]</scope>
</reference>
<reference key="4">
    <citation type="journal article" date="2004" name="Genome Res.">
        <title>The status, quality, and expansion of the NIH full-length cDNA project: the Mammalian Gene Collection (MGC).</title>
        <authorList>
            <consortium name="The MGC Project Team"/>
        </authorList>
    </citation>
    <scope>NUCLEOTIDE SEQUENCE [LARGE SCALE MRNA] (ISOFORM 1)</scope>
</reference>
<reference key="5">
    <citation type="journal article" date="2007" name="Int. J. Cancer">
        <title>A yeast two-hybrid system using Sp17 identified ropporin as a novel cancer-testis antigen in hematologic malignancies.</title>
        <authorList>
            <person name="Li Z."/>
            <person name="Li W."/>
            <person name="Meklat F."/>
            <person name="Wang Z."/>
            <person name="Zhang J."/>
            <person name="Zhang Y."/>
            <person name="Lim S.H."/>
        </authorList>
    </citation>
    <scope>TISSUE SPECIFICITY</scope>
    <scope>POSSIBLE INTERACTION WITH SPA17</scope>
    <scope>DEVELOPMENTAL STAGE</scope>
    <scope>IDENTIFICATION AS A CANCER/TESTIS ANTIGEN</scope>
</reference>
<protein>
    <recommendedName>
        <fullName>Ropporin-1A</fullName>
    </recommendedName>
    <alternativeName>
        <fullName>Cancer/testis antigen 91</fullName>
        <shortName>CT91</shortName>
    </alternativeName>
    <alternativeName>
        <fullName>Rhophilin-associated protein 1A</fullName>
    </alternativeName>
</protein>
<organism>
    <name type="scientific">Homo sapiens</name>
    <name type="common">Human</name>
    <dbReference type="NCBI Taxonomy" id="9606"/>
    <lineage>
        <taxon>Eukaryota</taxon>
        <taxon>Metazoa</taxon>
        <taxon>Chordata</taxon>
        <taxon>Craniata</taxon>
        <taxon>Vertebrata</taxon>
        <taxon>Euteleostomi</taxon>
        <taxon>Mammalia</taxon>
        <taxon>Eutheria</taxon>
        <taxon>Euarchontoglires</taxon>
        <taxon>Primates</taxon>
        <taxon>Haplorrhini</taxon>
        <taxon>Catarrhini</taxon>
        <taxon>Hominidae</taxon>
        <taxon>Homo</taxon>
    </lineage>
</organism>
<gene>
    <name type="primary">ROPN1</name>
    <name type="synonym">ROPN1A</name>
</gene>
<sequence length="212" mass="23893">MAQTDKPTCIPPELPKMLKEFAKAAIRVQPQDLIQWAADYFEALSRGETPPVRERSERVALCNRAELTPELLKILHSQVAGRLIIRAEELAQMWKVVNLPTDLFNSVMNVGRFTEEIEWLKFLALACSALGVTITKTLKIVCEVLSCDHNGGSPRIPFSTFQFLYTYIAKVDGEISASHVSRMLNYMEQEVIGPDGIITVNDFTQNPRVQLE</sequence>
<comment type="function">
    <text evidence="4">Important for male fertility. With ROPN1L, involved in fibrous sheath integrity and sperm motility, plays a role in PKA-dependent signaling processes required for spermatozoa capacitation.</text>
</comment>
<comment type="subunit">
    <text evidence="3 4 5">Homodimer. Interacts with AKAP3 and RHPN1 (By similarity). May interact with SPA17 (PubMed:17551920). Interacts with FSCB; the interaction increases upon spermatozoa capacitation conditions (By similarity). Interacts with CFAP61 (By similarity).</text>
</comment>
<comment type="interaction">
    <interactant intactId="EBI-1378139">
        <id>Q9HAT0</id>
    </interactant>
    <interactant intactId="EBI-18397742">
        <id>P0CW23</id>
        <label>AKAIN1</label>
    </interactant>
    <organismsDiffer>false</organismsDiffer>
    <experiments>3</experiments>
</comment>
<comment type="interaction">
    <interactant intactId="EBI-1378139">
        <id>Q9HAT0</id>
    </interactant>
    <interactant intactId="EBI-2119626">
        <id>Q86UN6</id>
        <label>AKAP14</label>
    </interactant>
    <organismsDiffer>false</organismsDiffer>
    <experiments>3</experiments>
</comment>
<comment type="interaction">
    <interactant intactId="EBI-1378139">
        <id>Q9HAT0</id>
    </interactant>
    <interactant intactId="EBI-703640">
        <id>P24588</id>
        <label>AKAP5</label>
    </interactant>
    <organismsDiffer>false</organismsDiffer>
    <experiments>3</experiments>
</comment>
<comment type="interaction">
    <interactant intactId="EBI-1378139">
        <id>Q9HAT0</id>
    </interactant>
    <interactant intactId="EBI-10185182">
        <id>O43687-2</id>
        <label>AKAP7</label>
    </interactant>
    <organismsDiffer>false</organismsDiffer>
    <experiments>9</experiments>
</comment>
<comment type="interaction">
    <interactant intactId="EBI-1378139">
        <id>Q9HAT0</id>
    </interactant>
    <interactant intactId="EBI-541426">
        <id>Q9BXS5</id>
        <label>AP1M1</label>
    </interactant>
    <organismsDiffer>false</organismsDiffer>
    <experiments>3</experiments>
</comment>
<comment type="interaction">
    <interactant intactId="EBI-1378139">
        <id>Q9HAT0</id>
    </interactant>
    <interactant intactId="EBI-11961432">
        <id>Q32M84-2</id>
        <label>BTBD16</label>
    </interactant>
    <organismsDiffer>false</organismsDiffer>
    <experiments>3</experiments>
</comment>
<comment type="interaction">
    <interactant intactId="EBI-1378139">
        <id>Q9HAT0</id>
    </interactant>
    <interactant intactId="EBI-295634">
        <id>Q16543</id>
        <label>CDC37</label>
    </interactant>
    <organismsDiffer>false</organismsDiffer>
    <experiments>3</experiments>
</comment>
<comment type="interaction">
    <interactant intactId="EBI-1378139">
        <id>Q9HAT0</id>
    </interactant>
    <interactant intactId="EBI-10181988">
        <id>Q8IYX8-2</id>
        <label>CEP57L1</label>
    </interactant>
    <organismsDiffer>false</organismsDiffer>
    <experiments>3</experiments>
</comment>
<comment type="interaction">
    <interactant intactId="EBI-1378139">
        <id>Q9HAT0</id>
    </interactant>
    <interactant intactId="EBI-456371">
        <id>P61024</id>
        <label>CKS1B</label>
    </interactant>
    <organismsDiffer>false</organismsDiffer>
    <experiments>6</experiments>
</comment>
<comment type="interaction">
    <interactant intactId="EBI-1378139">
        <id>Q9HAT0</id>
    </interactant>
    <interactant intactId="EBI-750390">
        <id>Q6PJW8</id>
        <label>CNST</label>
    </interactant>
    <organismsDiffer>false</organismsDiffer>
    <experiments>5</experiments>
</comment>
<comment type="interaction">
    <interactant intactId="EBI-1378139">
        <id>Q9HAT0</id>
    </interactant>
    <interactant intactId="EBI-12205861">
        <id>Q8NFT6-2</id>
        <label>DBF4B</label>
    </interactant>
    <organismsDiffer>false</organismsDiffer>
    <experiments>6</experiments>
</comment>
<comment type="interaction">
    <interactant intactId="EBI-1378139">
        <id>Q9HAT0</id>
    </interactant>
    <interactant intactId="EBI-1183307">
        <id>P19447</id>
        <label>ERCC3</label>
    </interactant>
    <organismsDiffer>false</organismsDiffer>
    <experiments>3</experiments>
</comment>
<comment type="interaction">
    <interactant intactId="EBI-1378139">
        <id>Q9HAT0</id>
    </interactant>
    <interactant intactId="EBI-1752811">
        <id>Q9BQ89</id>
        <label>FAM110A</label>
    </interactant>
    <organismsDiffer>false</organismsDiffer>
    <experiments>3</experiments>
</comment>
<comment type="interaction">
    <interactant intactId="EBI-1378139">
        <id>Q9HAT0</id>
    </interactant>
    <interactant intactId="EBI-2834075">
        <id>Q9UHL3</id>
        <label>FAM153A</label>
    </interactant>
    <organismsDiffer>false</organismsDiffer>
    <experiments>3</experiments>
</comment>
<comment type="interaction">
    <interactant intactId="EBI-1378139">
        <id>Q9HAT0</id>
    </interactant>
    <interactant intactId="EBI-12940382">
        <id>P0C7A2-2</id>
        <label>FAM153B</label>
    </interactant>
    <organismsDiffer>false</organismsDiffer>
    <experiments>5</experiments>
</comment>
<comment type="interaction">
    <interactant intactId="EBI-1378139">
        <id>Q9HAT0</id>
    </interactant>
    <interactant intactId="EBI-719941">
        <id>Q3B820</id>
        <label>FAM161A</label>
    </interactant>
    <organismsDiffer>false</organismsDiffer>
    <experiments>3</experiments>
</comment>
<comment type="interaction">
    <interactant intactId="EBI-1378139">
        <id>Q9HAT0</id>
    </interactant>
    <interactant intactId="EBI-6658203">
        <id>Q86YD7</id>
        <label>FAM90A1</label>
    </interactant>
    <organismsDiffer>false</organismsDiffer>
    <experiments>3</experiments>
</comment>
<comment type="interaction">
    <interactant intactId="EBI-1378139">
        <id>Q9HAT0</id>
    </interactant>
    <interactant intactId="EBI-746682">
        <id>Q9NVN8</id>
        <label>GNL3L</label>
    </interactant>
    <organismsDiffer>false</organismsDiffer>
    <experiments>7</experiments>
</comment>
<comment type="interaction">
    <interactant intactId="EBI-1378139">
        <id>Q9HAT0</id>
    </interactant>
    <interactant intactId="EBI-746309">
        <id>Q92917</id>
        <label>GPKOW</label>
    </interactant>
    <organismsDiffer>false</organismsDiffer>
    <experiments>6</experiments>
</comment>
<comment type="interaction">
    <interactant intactId="EBI-1378139">
        <id>Q9HAT0</id>
    </interactant>
    <interactant intactId="EBI-10298318">
        <id>Q9BTB7</id>
        <label>HNRPUL1</label>
    </interactant>
    <organismsDiffer>false</organismsDiffer>
    <experiments>3</experiments>
</comment>
<comment type="interaction">
    <interactant intactId="EBI-1378139">
        <id>Q9HAT0</id>
    </interactant>
    <interactant intactId="EBI-2805604">
        <id>Q2KHM9</id>
        <label>KIAA0753</label>
    </interactant>
    <organismsDiffer>false</organismsDiffer>
    <experiments>3</experiments>
</comment>
<comment type="interaction">
    <interactant intactId="EBI-1378139">
        <id>Q9HAT0</id>
    </interactant>
    <interactant intactId="EBI-10254090">
        <id>Q6PJI1</id>
        <label>KIF9</label>
    </interactant>
    <organismsDiffer>false</organismsDiffer>
    <experiments>3</experiments>
</comment>
<comment type="interaction">
    <interactant intactId="EBI-1378139">
        <id>Q9HAT0</id>
    </interactant>
    <interactant intactId="EBI-726510">
        <id>Q96BZ8</id>
        <label>LENG1</label>
    </interactant>
    <organismsDiffer>false</organismsDiffer>
    <experiments>8</experiments>
</comment>
<comment type="interaction">
    <interactant intactId="EBI-1378139">
        <id>Q9HAT0</id>
    </interactant>
    <interactant intactId="EBI-2798728">
        <id>P61968</id>
        <label>LMO4</label>
    </interactant>
    <organismsDiffer>false</organismsDiffer>
    <experiments>3</experiments>
</comment>
<comment type="interaction">
    <interactant intactId="EBI-1378139">
        <id>Q9HAT0</id>
    </interactant>
    <interactant intactId="EBI-739832">
        <id>Q8TBB1</id>
        <label>LNX1</label>
    </interactant>
    <organismsDiffer>false</organismsDiffer>
    <experiments>5</experiments>
</comment>
<comment type="interaction">
    <interactant intactId="EBI-1378139">
        <id>Q9HAT0</id>
    </interactant>
    <interactant intactId="EBI-741158">
        <id>Q96HA8</id>
        <label>NTAQ1</label>
    </interactant>
    <organismsDiffer>false</organismsDiffer>
    <experiments>5</experiments>
</comment>
<comment type="interaction">
    <interactant intactId="EBI-1378139">
        <id>Q9HAT0</id>
    </interactant>
    <interactant intactId="EBI-79165">
        <id>Q9NRD5</id>
        <label>PICK1</label>
    </interactant>
    <organismsDiffer>false</organismsDiffer>
    <experiments>3</experiments>
</comment>
<comment type="interaction">
    <interactant intactId="EBI-1378139">
        <id>Q9HAT0</id>
    </interactant>
    <interactant intactId="EBI-10987518">
        <id>Q99959-2</id>
        <label>PKP2</label>
    </interactant>
    <organismsDiffer>false</organismsDiffer>
    <experiments>3</experiments>
</comment>
<comment type="interaction">
    <interactant intactId="EBI-1378139">
        <id>Q9HAT0</id>
    </interactant>
    <interactant intactId="EBI-5452779">
        <id>Q9BUI4</id>
        <label>POLR3C</label>
    </interactant>
    <organismsDiffer>false</organismsDiffer>
    <experiments>3</experiments>
</comment>
<comment type="interaction">
    <interactant intactId="EBI-1378139">
        <id>Q9HAT0</id>
    </interactant>
    <interactant intactId="EBI-11320284">
        <id>Q9NQX0</id>
        <label>PRDM6</label>
    </interactant>
    <organismsDiffer>false</organismsDiffer>
    <experiments>3</experiments>
</comment>
<comment type="interaction">
    <interactant intactId="EBI-1378139">
        <id>Q9HAT0</id>
    </interactant>
    <interactant intactId="EBI-1181405">
        <id>Q13131</id>
        <label>PRKAA1</label>
    </interactant>
    <organismsDiffer>false</organismsDiffer>
    <experiments>4</experiments>
</comment>
<comment type="interaction">
    <interactant intactId="EBI-1378139">
        <id>Q9HAT0</id>
    </interactant>
    <interactant intactId="EBI-359352">
        <id>P25786</id>
        <label>PSMA1</label>
    </interactant>
    <organismsDiffer>false</organismsDiffer>
    <experiments>6</experiments>
</comment>
<comment type="interaction">
    <interactant intactId="EBI-1378139">
        <id>Q9HAT0</id>
    </interactant>
    <interactant intactId="EBI-1378139">
        <id>Q9HAT0</id>
        <label>ROPN1</label>
    </interactant>
    <organismsDiffer>false</organismsDiffer>
    <experiments>6</experiments>
</comment>
<comment type="interaction">
    <interactant intactId="EBI-1378139">
        <id>Q9HAT0</id>
    </interactant>
    <interactant intactId="EBI-10217913">
        <id>Q14D33</id>
        <label>RTP5</label>
    </interactant>
    <organismsDiffer>false</organismsDiffer>
    <experiments>6</experiments>
</comment>
<comment type="interaction">
    <interactant intactId="EBI-1378139">
        <id>Q9HAT0</id>
    </interactant>
    <interactant intactId="EBI-727004">
        <id>O00560</id>
        <label>SDCBP</label>
    </interactant>
    <organismsDiffer>false</organismsDiffer>
    <experiments>6</experiments>
</comment>
<comment type="interaction">
    <interactant intactId="EBI-1378139">
        <id>Q9HAT0</id>
    </interactant>
    <interactant intactId="EBI-2826300">
        <id>Q53GC0</id>
        <label>SERTAD1</label>
    </interactant>
    <organismsDiffer>false</organismsDiffer>
    <experiments>3</experiments>
</comment>
<comment type="interaction">
    <interactant intactId="EBI-1378139">
        <id>Q9HAT0</id>
    </interactant>
    <interactant intactId="EBI-741237">
        <id>O60504</id>
        <label>SORBS3</label>
    </interactant>
    <organismsDiffer>false</organismsDiffer>
    <experiments>3</experiments>
</comment>
<comment type="interaction">
    <interactant intactId="EBI-1378139">
        <id>Q9HAT0</id>
    </interactant>
    <interactant intactId="EBI-1377865">
        <id>Q15506</id>
        <label>SPA17</label>
    </interactant>
    <organismsDiffer>false</organismsDiffer>
    <experiments>9</experiments>
</comment>
<comment type="interaction">
    <interactant intactId="EBI-1378139">
        <id>Q9HAT0</id>
    </interactant>
    <interactant intactId="EBI-742688">
        <id>Q9NZD8</id>
        <label>SPG21</label>
    </interactant>
    <organismsDiffer>false</organismsDiffer>
    <experiments>3</experiments>
</comment>
<comment type="interaction">
    <interactant intactId="EBI-1378139">
        <id>Q9HAT0</id>
    </interactant>
    <interactant intactId="EBI-747142">
        <id>Q96C24</id>
        <label>SYTL4</label>
    </interactant>
    <organismsDiffer>false</organismsDiffer>
    <experiments>3</experiments>
</comment>
<comment type="interaction">
    <interactant intactId="EBI-1378139">
        <id>Q9HAT0</id>
    </interactant>
    <interactant intactId="EBI-2129889">
        <id>O75382</id>
        <label>TRIM3</label>
    </interactant>
    <organismsDiffer>false</organismsDiffer>
    <experiments>3</experiments>
</comment>
<comment type="interaction">
    <interactant intactId="EBI-1378139">
        <id>Q9HAT0</id>
    </interactant>
    <interactant intactId="EBI-10241197">
        <id>Q3SY00</id>
        <label>TSGA10IP</label>
    </interactant>
    <organismsDiffer>false</organismsDiffer>
    <experiments>3</experiments>
</comment>
<comment type="interaction">
    <interactant intactId="EBI-1378139">
        <id>Q9HAT0</id>
    </interactant>
    <interactant intactId="EBI-9053916">
        <id>Q63HK5</id>
        <label>TSHZ3</label>
    </interactant>
    <organismsDiffer>false</organismsDiffer>
    <experiments>3</experiments>
</comment>
<comment type="interaction">
    <interactant intactId="EBI-1378139">
        <id>Q9HAT0</id>
    </interactant>
    <interactant intactId="EBI-5357290">
        <id>O75386</id>
        <label>TULP3</label>
    </interactant>
    <organismsDiffer>false</organismsDiffer>
    <experiments>3</experiments>
</comment>
<comment type="interaction">
    <interactant intactId="EBI-1378139">
        <id>Q9HAT0</id>
    </interactant>
    <interactant intactId="EBI-716589">
        <id>Q96B02</id>
        <label>UBE2W</label>
    </interactant>
    <organismsDiffer>false</organismsDiffer>
    <experiments>3</experiments>
</comment>
<comment type="interaction">
    <interactant intactId="EBI-1378139">
        <id>Q9HAT0</id>
    </interactant>
    <interactant intactId="EBI-10285774">
        <id>Q96FI0</id>
        <label>UBE2W</label>
    </interactant>
    <organismsDiffer>false</organismsDiffer>
    <experiments>3</experiments>
</comment>
<comment type="interaction">
    <interactant intactId="EBI-1378139">
        <id>Q9HAT0</id>
    </interactant>
    <interactant intactId="EBI-2527283">
        <id>Q96AX1</id>
        <label>VPS33A</label>
    </interactant>
    <organismsDiffer>false</organismsDiffer>
    <experiments>3</experiments>
</comment>
<comment type="interaction">
    <interactant intactId="EBI-1378139">
        <id>Q9HAT0</id>
    </interactant>
    <interactant intactId="EBI-10176176">
        <id>B7ZMN2</id>
        <label>XKR3</label>
    </interactant>
    <organismsDiffer>false</organismsDiffer>
    <experiments>3</experiments>
</comment>
<comment type="subcellular location">
    <subcellularLocation>
        <location evidence="4">Cell projection</location>
        <location evidence="4">Cilium</location>
        <location evidence="4">Flagellum</location>
    </subcellularLocation>
    <text evidence="4">In the sperm tail, found in the principal piece and in the cytoplasmic droplet located at the distal end of the midpiece. Inner surface of the fibrous sheath.</text>
</comment>
<comment type="alternative products">
    <event type="alternative splicing"/>
    <isoform>
        <id>Q9HAT0-1</id>
        <name>1</name>
        <sequence type="displayed"/>
    </isoform>
    <isoform>
        <id>Q9HAT0-2</id>
        <name>2</name>
        <sequence type="described" ref="VSP_028743 VSP_028744"/>
    </isoform>
</comment>
<comment type="tissue specificity">
    <text evidence="5">Testis specific in adult. Overexpressed in hematologic tumor cells.</text>
</comment>
<comment type="developmental stage">
    <text evidence="5">Expressed in fetal liver.</text>
</comment>
<comment type="domain">
    <text evidence="1">The RIIa domain mediates interaction with AKAP3.</text>
</comment>
<comment type="PTM">
    <text evidence="4">Sumoylated, sumoylation decreases upon spermatozoa capacitation conditions.</text>
</comment>
<comment type="miscellaneous">
    <text>'Ropporin' comes from the Japanese word 'oppo' which means 'tail'.</text>
</comment>
<comment type="similarity">
    <text evidence="7">Belongs to the ropporin family.</text>
</comment>
<evidence type="ECO:0000250" key="1"/>
<evidence type="ECO:0000250" key="2">
    <source>
        <dbReference type="UniProtKB" id="Q4KLL5"/>
    </source>
</evidence>
<evidence type="ECO:0000250" key="3">
    <source>
        <dbReference type="UniProtKB" id="Q9BZX4"/>
    </source>
</evidence>
<evidence type="ECO:0000250" key="4">
    <source>
        <dbReference type="UniProtKB" id="Q9ESG2"/>
    </source>
</evidence>
<evidence type="ECO:0000269" key="5">
    <source>
    </source>
</evidence>
<evidence type="ECO:0000303" key="6">
    <source>
    </source>
</evidence>
<evidence type="ECO:0000305" key="7"/>
<keyword id="KW-0025">Alternative splicing</keyword>
<keyword id="KW-0966">Cell projection</keyword>
<keyword id="KW-0969">Cilium</keyword>
<keyword id="KW-0282">Flagellum</keyword>
<keyword id="KW-0597">Phosphoprotein</keyword>
<keyword id="KW-1267">Proteomics identification</keyword>
<keyword id="KW-1185">Reference proteome</keyword>
<keyword id="KW-0832">Ubl conjugation</keyword>
<accession>Q9HAT0</accession>
<accession>D3DN99</accession>
<accession>Q9UF38</accession>
<dbReference type="EMBL" id="AF303889">
    <property type="protein sequence ID" value="AAG27712.2"/>
    <property type="molecule type" value="mRNA"/>
</dbReference>
<dbReference type="EMBL" id="AL133624">
    <property type="protein sequence ID" value="CAB63750.2"/>
    <property type="molecule type" value="mRNA"/>
</dbReference>
<dbReference type="EMBL" id="CH471052">
    <property type="protein sequence ID" value="EAW79425.1"/>
    <property type="molecule type" value="Genomic_DNA"/>
</dbReference>
<dbReference type="EMBL" id="CH471052">
    <property type="protein sequence ID" value="EAW79426.1"/>
    <property type="molecule type" value="Genomic_DNA"/>
</dbReference>
<dbReference type="EMBL" id="CH471052">
    <property type="protein sequence ID" value="EAW79427.1"/>
    <property type="molecule type" value="Genomic_DNA"/>
</dbReference>
<dbReference type="EMBL" id="BC132744">
    <property type="protein sequence ID" value="AAI32745.1"/>
    <property type="molecule type" value="mRNA"/>
</dbReference>
<dbReference type="EMBL" id="BC132746">
    <property type="protein sequence ID" value="AAI32747.1"/>
    <property type="molecule type" value="mRNA"/>
</dbReference>
<dbReference type="CCDS" id="CCDS3026.1">
    <molecule id="Q9HAT0-1"/>
</dbReference>
<dbReference type="RefSeq" id="NP_001304703.1">
    <molecule id="Q9HAT0-1"/>
    <property type="nucleotide sequence ID" value="NM_001317774.2"/>
</dbReference>
<dbReference type="RefSeq" id="NP_001381146.1">
    <molecule id="Q9HAT0-1"/>
    <property type="nucleotide sequence ID" value="NM_001394217.1"/>
</dbReference>
<dbReference type="RefSeq" id="NP_001381147.1">
    <molecule id="Q9HAT0-1"/>
    <property type="nucleotide sequence ID" value="NM_001394218.1"/>
</dbReference>
<dbReference type="RefSeq" id="NP_001381148.1">
    <molecule id="Q9HAT0-1"/>
    <property type="nucleotide sequence ID" value="NM_001394219.1"/>
</dbReference>
<dbReference type="RefSeq" id="NP_060048.2">
    <molecule id="Q9HAT0-1"/>
    <property type="nucleotide sequence ID" value="NM_017578.3"/>
</dbReference>
<dbReference type="RefSeq" id="XP_011511235.1">
    <property type="nucleotide sequence ID" value="XM_011512933.2"/>
</dbReference>
<dbReference type="RefSeq" id="XP_011511236.1">
    <property type="nucleotide sequence ID" value="XM_011512934.2"/>
</dbReference>
<dbReference type="RefSeq" id="XP_047304326.1">
    <molecule id="Q9HAT0-1"/>
    <property type="nucleotide sequence ID" value="XM_047448370.1"/>
</dbReference>
<dbReference type="RefSeq" id="XP_054202934.1">
    <molecule id="Q9HAT0-1"/>
    <property type="nucleotide sequence ID" value="XM_054346959.1"/>
</dbReference>
<dbReference type="SMR" id="Q9HAT0"/>
<dbReference type="BioGRID" id="120138">
    <property type="interactions" value="62"/>
</dbReference>
<dbReference type="FunCoup" id="Q9HAT0">
    <property type="interactions" value="5"/>
</dbReference>
<dbReference type="IntAct" id="Q9HAT0">
    <property type="interactions" value="63"/>
</dbReference>
<dbReference type="MINT" id="Q9HAT0"/>
<dbReference type="STRING" id="9606.ENSP00000184183"/>
<dbReference type="iPTMnet" id="Q9HAT0"/>
<dbReference type="PhosphoSitePlus" id="Q9HAT0"/>
<dbReference type="BioMuta" id="ROPN1"/>
<dbReference type="DMDM" id="74718687"/>
<dbReference type="MassIVE" id="Q9HAT0"/>
<dbReference type="PaxDb" id="9606-ENSP00000184183"/>
<dbReference type="PeptideAtlas" id="Q9HAT0"/>
<dbReference type="ProteomicsDB" id="81425">
    <molecule id="Q9HAT0-1"/>
</dbReference>
<dbReference type="ProteomicsDB" id="81426">
    <molecule id="Q9HAT0-2"/>
</dbReference>
<dbReference type="Antibodypedia" id="32969">
    <property type="antibodies" value="57 antibodies from 14 providers"/>
</dbReference>
<dbReference type="DNASU" id="54763"/>
<dbReference type="Ensembl" id="ENST00000184183.8">
    <molecule id="Q9HAT0-1"/>
    <property type="protein sequence ID" value="ENSP00000184183.4"/>
    <property type="gene ID" value="ENSG00000065371.18"/>
</dbReference>
<dbReference type="Ensembl" id="ENST00000405845.8">
    <molecule id="Q9HAT0-1"/>
    <property type="protein sequence ID" value="ENSP00000385919.3"/>
    <property type="gene ID" value="ENSG00000065371.18"/>
</dbReference>
<dbReference type="Ensembl" id="ENST00000459660.5">
    <molecule id="Q9HAT0-2"/>
    <property type="protein sequence ID" value="ENSP00000420590.1"/>
    <property type="gene ID" value="ENSG00000065371.18"/>
</dbReference>
<dbReference type="Ensembl" id="ENST00000479867.1">
    <molecule id="Q9HAT0-2"/>
    <property type="protein sequence ID" value="ENSP00000420567.1"/>
    <property type="gene ID" value="ENSG00000065371.18"/>
</dbReference>
<dbReference type="Ensembl" id="ENST00000484329.1">
    <molecule id="Q9HAT0-2"/>
    <property type="protein sequence ID" value="ENSP00000419205.1"/>
    <property type="gene ID" value="ENSG00000065371.18"/>
</dbReference>
<dbReference type="Ensembl" id="ENST00000495093.1">
    <molecule id="Q9HAT0-2"/>
    <property type="protein sequence ID" value="ENSP00000417379.1"/>
    <property type="gene ID" value="ENSG00000065371.18"/>
</dbReference>
<dbReference type="Ensembl" id="ENST00000620893.4">
    <molecule id="Q9HAT0-1"/>
    <property type="protein sequence ID" value="ENSP00000483603.1"/>
    <property type="gene ID" value="ENSG00000065371.18"/>
</dbReference>
<dbReference type="GeneID" id="54763"/>
<dbReference type="KEGG" id="hsa:54763"/>
<dbReference type="MANE-Select" id="ENST00000405845.8">
    <property type="protein sequence ID" value="ENSP00000385919.3"/>
    <property type="RefSeq nucleotide sequence ID" value="NM_001317774.2"/>
    <property type="RefSeq protein sequence ID" value="NP_001304703.1"/>
</dbReference>
<dbReference type="UCSC" id="uc003eha.4">
    <molecule id="Q9HAT0-1"/>
    <property type="organism name" value="human"/>
</dbReference>
<dbReference type="AGR" id="HGNC:17692"/>
<dbReference type="CTD" id="54763"/>
<dbReference type="DisGeNET" id="54763"/>
<dbReference type="GeneCards" id="ROPN1"/>
<dbReference type="HGNC" id="HGNC:17692">
    <property type="gene designation" value="ROPN1"/>
</dbReference>
<dbReference type="HPA" id="ENSG00000065371">
    <property type="expression patterns" value="Tissue enriched (testis)"/>
</dbReference>
<dbReference type="neXtProt" id="NX_Q9HAT0"/>
<dbReference type="OpenTargets" id="ENSG00000065371"/>
<dbReference type="PharmGKB" id="PA134952827"/>
<dbReference type="VEuPathDB" id="HostDB:ENSG00000065371"/>
<dbReference type="eggNOG" id="ENOG502R2JI">
    <property type="taxonomic scope" value="Eukaryota"/>
</dbReference>
<dbReference type="GeneTree" id="ENSGT00390000012731"/>
<dbReference type="HOGENOM" id="CLU_069829_1_0_1"/>
<dbReference type="InParanoid" id="Q9HAT0"/>
<dbReference type="OMA" id="EFKAQEW"/>
<dbReference type="OrthoDB" id="10067602at2759"/>
<dbReference type="PAN-GO" id="Q9HAT0">
    <property type="GO annotations" value="3 GO annotations based on evolutionary models"/>
</dbReference>
<dbReference type="PhylomeDB" id="Q9HAT0"/>
<dbReference type="TreeFam" id="TF105421"/>
<dbReference type="PathwayCommons" id="Q9HAT0"/>
<dbReference type="Reactome" id="R-HSA-5666185">
    <property type="pathway name" value="RHO GTPases Activate Rhotekin and Rhophilins"/>
</dbReference>
<dbReference type="SignaLink" id="Q9HAT0"/>
<dbReference type="BioGRID-ORCS" id="54763">
    <property type="hits" value="18 hits in 1096 CRISPR screens"/>
</dbReference>
<dbReference type="GenomeRNAi" id="54763"/>
<dbReference type="Pharos" id="Q9HAT0">
    <property type="development level" value="Tbio"/>
</dbReference>
<dbReference type="PRO" id="PR:Q9HAT0"/>
<dbReference type="Proteomes" id="UP000005640">
    <property type="component" value="Chromosome 3"/>
</dbReference>
<dbReference type="RNAct" id="Q9HAT0">
    <property type="molecule type" value="protein"/>
</dbReference>
<dbReference type="Bgee" id="ENSG00000065371">
    <property type="expression patterns" value="Expressed in sperm and 84 other cell types or tissues"/>
</dbReference>
<dbReference type="ExpressionAtlas" id="Q9HAT0">
    <property type="expression patterns" value="baseline and differential"/>
</dbReference>
<dbReference type="GO" id="GO:0005737">
    <property type="term" value="C:cytoplasm"/>
    <property type="evidence" value="ECO:0000314"/>
    <property type="project" value="BHF-UCL"/>
</dbReference>
<dbReference type="GO" id="GO:0031514">
    <property type="term" value="C:motile cilium"/>
    <property type="evidence" value="ECO:0000318"/>
    <property type="project" value="GO_Central"/>
</dbReference>
<dbReference type="GO" id="GO:0005634">
    <property type="term" value="C:nucleus"/>
    <property type="evidence" value="ECO:0007005"/>
    <property type="project" value="UniProtKB"/>
</dbReference>
<dbReference type="GO" id="GO:0042802">
    <property type="term" value="F:identical protein binding"/>
    <property type="evidence" value="ECO:0000353"/>
    <property type="project" value="IntAct"/>
</dbReference>
<dbReference type="GO" id="GO:0044782">
    <property type="term" value="P:cilium organization"/>
    <property type="evidence" value="ECO:0000250"/>
    <property type="project" value="UniProtKB"/>
</dbReference>
<dbReference type="GO" id="GO:0030317">
    <property type="term" value="P:flagellated sperm motility"/>
    <property type="evidence" value="ECO:0000250"/>
    <property type="project" value="UniProtKB"/>
</dbReference>
<dbReference type="GO" id="GO:0061512">
    <property type="term" value="P:protein localization to cilium"/>
    <property type="evidence" value="ECO:0000250"/>
    <property type="project" value="UniProtKB"/>
</dbReference>
<dbReference type="GO" id="GO:0001932">
    <property type="term" value="P:regulation of protein phosphorylation"/>
    <property type="evidence" value="ECO:0000250"/>
    <property type="project" value="UniProtKB"/>
</dbReference>
<dbReference type="GO" id="GO:0048240">
    <property type="term" value="P:sperm capacitation"/>
    <property type="evidence" value="ECO:0000250"/>
    <property type="project" value="UniProtKB"/>
</dbReference>
<dbReference type="CDD" id="cd23019">
    <property type="entry name" value="DD_ROP"/>
    <property type="match status" value="1"/>
</dbReference>
<dbReference type="FunFam" id="1.20.890.10:FF:000004">
    <property type="entry name" value="ropporin-1-like protein isoform X2"/>
    <property type="match status" value="1"/>
</dbReference>
<dbReference type="Gene3D" id="1.20.890.10">
    <property type="entry name" value="cAMP-dependent protein kinase regulatory subunit, dimerization-anchoring domain"/>
    <property type="match status" value="1"/>
</dbReference>
<dbReference type="InterPro" id="IPR047844">
    <property type="entry name" value="ROP_DD"/>
</dbReference>
<dbReference type="PANTHER" id="PTHR14952">
    <property type="entry name" value="ROPPORIN-1-LIKE PROTEIN"/>
    <property type="match status" value="1"/>
</dbReference>
<dbReference type="PANTHER" id="PTHR14952:SF18">
    <property type="entry name" value="ROPPORIN-1A"/>
    <property type="match status" value="1"/>
</dbReference>
<dbReference type="SUPFAM" id="SSF47391">
    <property type="entry name" value="Dimerization-anchoring domain of cAMP-dependent PK regulatory subunit"/>
    <property type="match status" value="1"/>
</dbReference>
<name>ROP1A_HUMAN</name>
<feature type="chain" id="PRO_0000307392" description="Ropporin-1A">
    <location>
        <begin position="1"/>
        <end position="212"/>
    </location>
</feature>
<feature type="domain" description="RIIa">
    <location>
        <begin position="12"/>
        <end position="49"/>
    </location>
</feature>
<feature type="region of interest" description="Interaction with RHPN1" evidence="1">
    <location>
        <begin position="209"/>
        <end position="212"/>
    </location>
</feature>
<feature type="modified residue" description="Phosphoserine" evidence="2">
    <location>
        <position position="56"/>
    </location>
</feature>
<feature type="splice variant" id="VSP_028743" description="In isoform 2." evidence="6">
    <original>DYFEALSRGETPPVRERSER</original>
    <variation>EYVLLSRLHPLEDGRRQRVL</variation>
    <location>
        <begin position="39"/>
        <end position="58"/>
    </location>
</feature>
<feature type="splice variant" id="VSP_028744" description="In isoform 2." evidence="6">
    <location>
        <begin position="59"/>
        <end position="212"/>
    </location>
</feature>